<name>NTPP_CUTAK</name>
<organism>
    <name type="scientific">Cutibacterium acnes (strain DSM 16379 / KPA171202)</name>
    <name type="common">Propionibacterium acnes</name>
    <dbReference type="NCBI Taxonomy" id="267747"/>
    <lineage>
        <taxon>Bacteria</taxon>
        <taxon>Bacillati</taxon>
        <taxon>Actinomycetota</taxon>
        <taxon>Actinomycetes</taxon>
        <taxon>Propionibacteriales</taxon>
        <taxon>Propionibacteriaceae</taxon>
        <taxon>Cutibacterium</taxon>
    </lineage>
</organism>
<feature type="chain" id="PRO_0000267372" description="Nucleoside triphosphate pyrophosphatase">
    <location>
        <begin position="1"/>
        <end position="213"/>
    </location>
</feature>
<feature type="active site" description="Proton acceptor" evidence="1">
    <location>
        <position position="77"/>
    </location>
</feature>
<evidence type="ECO:0000255" key="1">
    <source>
        <dbReference type="HAMAP-Rule" id="MF_00528"/>
    </source>
</evidence>
<evidence type="ECO:0000305" key="2"/>
<dbReference type="EC" id="3.6.1.9" evidence="1"/>
<dbReference type="EMBL" id="AE017283">
    <property type="protein sequence ID" value="AAT83440.1"/>
    <property type="status" value="ALT_INIT"/>
    <property type="molecule type" value="Genomic_DNA"/>
</dbReference>
<dbReference type="RefSeq" id="WP_014167039.1">
    <property type="nucleotide sequence ID" value="NZ_CP025935.1"/>
</dbReference>
<dbReference type="SMR" id="Q6A725"/>
<dbReference type="EnsemblBacteria" id="AAT83440">
    <property type="protein sequence ID" value="AAT83440"/>
    <property type="gene ID" value="PPA1709"/>
</dbReference>
<dbReference type="KEGG" id="pac:PPA1709"/>
<dbReference type="eggNOG" id="COG0424">
    <property type="taxonomic scope" value="Bacteria"/>
</dbReference>
<dbReference type="HOGENOM" id="CLU_040416_1_2_11"/>
<dbReference type="Proteomes" id="UP000000603">
    <property type="component" value="Chromosome"/>
</dbReference>
<dbReference type="GO" id="GO:0005737">
    <property type="term" value="C:cytoplasm"/>
    <property type="evidence" value="ECO:0007669"/>
    <property type="project" value="UniProtKB-SubCell"/>
</dbReference>
<dbReference type="GO" id="GO:0047429">
    <property type="term" value="F:nucleoside triphosphate diphosphatase activity"/>
    <property type="evidence" value="ECO:0007669"/>
    <property type="project" value="UniProtKB-EC"/>
</dbReference>
<dbReference type="GO" id="GO:0009117">
    <property type="term" value="P:nucleotide metabolic process"/>
    <property type="evidence" value="ECO:0007669"/>
    <property type="project" value="UniProtKB-KW"/>
</dbReference>
<dbReference type="CDD" id="cd00555">
    <property type="entry name" value="Maf"/>
    <property type="match status" value="1"/>
</dbReference>
<dbReference type="Gene3D" id="3.90.950.10">
    <property type="match status" value="1"/>
</dbReference>
<dbReference type="HAMAP" id="MF_00528">
    <property type="entry name" value="Maf"/>
    <property type="match status" value="1"/>
</dbReference>
<dbReference type="InterPro" id="IPR029001">
    <property type="entry name" value="ITPase-like_fam"/>
</dbReference>
<dbReference type="InterPro" id="IPR003697">
    <property type="entry name" value="Maf-like"/>
</dbReference>
<dbReference type="NCBIfam" id="TIGR00172">
    <property type="entry name" value="maf"/>
    <property type="match status" value="1"/>
</dbReference>
<dbReference type="PANTHER" id="PTHR43213">
    <property type="entry name" value="BIFUNCTIONAL DTTP/UTP PYROPHOSPHATASE/METHYLTRANSFERASE PROTEIN-RELATED"/>
    <property type="match status" value="1"/>
</dbReference>
<dbReference type="PANTHER" id="PTHR43213:SF5">
    <property type="entry name" value="BIFUNCTIONAL DTTP_UTP PYROPHOSPHATASE_METHYLTRANSFERASE PROTEIN-RELATED"/>
    <property type="match status" value="1"/>
</dbReference>
<dbReference type="Pfam" id="PF02545">
    <property type="entry name" value="Maf"/>
    <property type="match status" value="1"/>
</dbReference>
<dbReference type="PIRSF" id="PIRSF006305">
    <property type="entry name" value="Maf"/>
    <property type="match status" value="1"/>
</dbReference>
<dbReference type="SUPFAM" id="SSF52972">
    <property type="entry name" value="ITPase-like"/>
    <property type="match status" value="1"/>
</dbReference>
<gene>
    <name type="ordered locus">PPA1709</name>
</gene>
<proteinExistence type="inferred from homology"/>
<accession>Q6A725</accession>
<comment type="function">
    <text evidence="1">Nucleoside triphosphate pyrophosphatase. May have a dual role in cell division arrest and in preventing the incorporation of modified nucleotides into cellular nucleic acids.</text>
</comment>
<comment type="catalytic activity">
    <reaction evidence="1">
        <text>a ribonucleoside 5'-triphosphate + H2O = a ribonucleoside 5'-phosphate + diphosphate + H(+)</text>
        <dbReference type="Rhea" id="RHEA:23996"/>
        <dbReference type="ChEBI" id="CHEBI:15377"/>
        <dbReference type="ChEBI" id="CHEBI:15378"/>
        <dbReference type="ChEBI" id="CHEBI:33019"/>
        <dbReference type="ChEBI" id="CHEBI:58043"/>
        <dbReference type="ChEBI" id="CHEBI:61557"/>
        <dbReference type="EC" id="3.6.1.9"/>
    </reaction>
</comment>
<comment type="catalytic activity">
    <reaction evidence="1">
        <text>a 2'-deoxyribonucleoside 5'-triphosphate + H2O = a 2'-deoxyribonucleoside 5'-phosphate + diphosphate + H(+)</text>
        <dbReference type="Rhea" id="RHEA:44644"/>
        <dbReference type="ChEBI" id="CHEBI:15377"/>
        <dbReference type="ChEBI" id="CHEBI:15378"/>
        <dbReference type="ChEBI" id="CHEBI:33019"/>
        <dbReference type="ChEBI" id="CHEBI:61560"/>
        <dbReference type="ChEBI" id="CHEBI:65317"/>
        <dbReference type="EC" id="3.6.1.9"/>
    </reaction>
</comment>
<comment type="cofactor">
    <cofactor evidence="1">
        <name>a divalent metal cation</name>
        <dbReference type="ChEBI" id="CHEBI:60240"/>
    </cofactor>
</comment>
<comment type="subcellular location">
    <subcellularLocation>
        <location evidence="1">Cytoplasm</location>
    </subcellularLocation>
</comment>
<comment type="similarity">
    <text evidence="1">Belongs to the Maf family.</text>
</comment>
<comment type="sequence caution" evidence="2">
    <conflict type="erroneous initiation">
        <sequence resource="EMBL-CDS" id="AAT83440"/>
    </conflict>
</comment>
<reference key="1">
    <citation type="journal article" date="2004" name="Science">
        <title>The complete genome sequence of Propionibacterium acnes, a commensal of human skin.</title>
        <authorList>
            <person name="Brueggemann H."/>
            <person name="Henne A."/>
            <person name="Hoster F."/>
            <person name="Liesegang H."/>
            <person name="Wiezer A."/>
            <person name="Strittmatter A."/>
            <person name="Hujer S."/>
            <person name="Duerre P."/>
            <person name="Gottschalk G."/>
        </authorList>
    </citation>
    <scope>NUCLEOTIDE SEQUENCE [LARGE SCALE GENOMIC DNA]</scope>
    <source>
        <strain>DSM 16379 / KPA171202</strain>
    </source>
</reference>
<keyword id="KW-0963">Cytoplasm</keyword>
<keyword id="KW-0378">Hydrolase</keyword>
<keyword id="KW-0546">Nucleotide metabolism</keyword>
<protein>
    <recommendedName>
        <fullName evidence="1">Nucleoside triphosphate pyrophosphatase</fullName>
        <ecNumber evidence="1">3.6.1.9</ecNumber>
    </recommendedName>
    <alternativeName>
        <fullName evidence="1">Nucleotide pyrophosphatase</fullName>
        <shortName evidence="1">Nucleotide PPase</shortName>
    </alternativeName>
</protein>
<sequence>MTTCFVLASKSPARLRMLRSAGIEPVVIASGADESHLRGEDAVAMTARLSRLKAHSVIESGALEEYPADRMIVVACDSVLNLDGRILGKPHTAERARQWWRRMRGHQGVLVSGHHVAVIVNGQLREQTRIGQTVVTFADLTDAEIDAYVDSGEPAAVAGAFTIDGLGGAFITRINGDPHNVTGISLPLLRQMLMDLDVEWSSLWNGPKGGHLS</sequence>